<comment type="function">
    <text evidence="2 3 4">Functions as extracellular chaperone that prevents aggregation of non native proteins. Prevents stress-induced aggregation of blood plasma proteins. Inhibits formation of amyloid fibrils by APP, APOC2, B2M, CALCA, CSN3, SNCA and aggregation-prone LYZ variants (in vitro). Does not require ATP. Maintains partially unfolded proteins in a state appropriate for subsequent refolding by other chaperones, such as HSPA8/HSC70. Does not refold proteins by itself. Binding to cell surface receptors triggers internalization of the chaperone-client complex and subsequent lysosomal or proteasomal degradation. When secreted, protects cells against apoptosis and against cytolysis by complement: inhibits assembly of the complement membrane attack complex (MAC) by preventing polymerization of C9 pore component of the MAC complex. Intracellular forms interact with ubiquitin and SCF (SKP1-CUL1-F-box protein) E3 ubiquitin-protein ligase complexes and promote the ubiquitination and subsequent proteasomal degradation of target proteins. Promotes proteasomal degradation of COMMD1 and IKBKB. Modulates NF-kappa-B transcriptional activity (By similarity). Following stress, promotes apoptosis (By similarity). Inhibits apoptosis when associated with the mitochondrial membrane by interference with BAX-dependent release of cytochrome c into the cytoplasm. Plays a role in the regulation of cell proliferation. An intracellular form suppresses stress-induced apoptosis by stabilizing mitochondrial membrane integrity through interaction with HSPA5. Secreted form does not affect caspase or BAX-mediated intrinsic apoptosis and TNF-induced NF-kappa-B-activity (By similarity). Secreted form act as an important modulator during neuronal differentiation through interaction with STMN3 (By similarity). Plays a role in the clearance of immune complexes that arise during cell injury (By similarity).</text>
</comment>
<comment type="subunit">
    <text evidence="2 3">Antiparallel disulfide-linked heterodimer of an alpha chain and a beta chain. Self-associates and forms higher oligomers. Interacts with a broad range of misfolded proteins, including APP, APOC2 and LYZ. Slightly acidic pH promotes interaction with misfolded proteins. Forms high-molecular weight oligomers upon interaction with misfolded proteins. Interacts with APOA1, LRP2, CLUAP1 and PON1. Interacts with the complement membrane attack complex. Interacts (via alpha chain) with XRCC6. Interacts with SYVN1, COMMD1, BTRC, CUL1 and with ubiquitin and SCF (SKP1-CUL1-F-box protein) E3 ubiquitin-protein ligase complexes. Interacts (via alpha chain) with BAX in stressed cells, where BAX undergoes a conformation change leading to association with the mitochondrial membrane. Does not interact with BAX in unstressed cells. Found in a complex with LTF, CLU, EPPIN and SEMG1. Interacts (immaturely glycosylated pre-secreted form) with HSPA5; this interaction promotes CLU stability and facilitates stress-induced CLU retrotranslocation from the secretory pathway to the mitochondria, thereby reducing stress-induced apoptosis by stabilizing mitochondrial membrane integrity. Interacts with BCL2L1; this interaction releases and activates BAX and promotes cell death. Interacts with TGFBR2 and ACVR1 (By similarity). Interacts (secreted form) with STMN3; this interaction may act as an important modulator during neuronal differentiation (By similarity). Interacts with VLDLR and LRP8 (By similarity).</text>
</comment>
<comment type="subcellular location">
    <subcellularLocation>
        <location evidence="3">Secreted</location>
    </subcellularLocation>
    <subcellularLocation>
        <location evidence="3">Nucleus</location>
    </subcellularLocation>
    <subcellularLocation>
        <location evidence="3">Cytoplasm</location>
    </subcellularLocation>
    <subcellularLocation>
        <location evidence="3">Mitochondrion membrane</location>
        <topology evidence="3">Peripheral membrane protein</topology>
        <orientation evidence="3">Cytoplasmic side</orientation>
    </subcellularLocation>
    <subcellularLocation>
        <location evidence="3">Cytoplasm</location>
        <location evidence="3">Cytosol</location>
    </subcellularLocation>
    <subcellularLocation>
        <location evidence="3">Microsome</location>
    </subcellularLocation>
    <subcellularLocation>
        <location evidence="3">Endoplasmic reticulum</location>
    </subcellularLocation>
    <subcellularLocation>
        <location evidence="3">Mitochondrion</location>
    </subcellularLocation>
    <subcellularLocation>
        <location evidence="3">Mitochondrion membrane</location>
    </subcellularLocation>
    <subcellularLocation>
        <location evidence="2">Cytoplasm</location>
        <location evidence="2">Perinuclear region</location>
    </subcellularLocation>
    <subcellularLocation>
        <location>Cytoplasmic vesicle</location>
        <location>Secretory vesicle</location>
        <location>Chromaffin granule</location>
    </subcellularLocation>
    <text evidence="3">Can retrotranslocate from the secretory compartments to the cytosol upon cellular stress. Detected in perinuclear foci that may be aggresomes containing misfolded, ubiquitinated proteins. Detected at the mitochondrion membrane upon induction of apoptosis. Under ER stress, a immaturely glycosylated pre-secreted form retrotranslocates from the endoplasmic reticulum (ER)-Golgi network to the cytoplasm to localize in the mitochondria through HSPA5 interaction. ER stress reduces secretion. Under the stress, minor amounts of non-secreted forms accumulate in cytoplasm.</text>
</comment>
<comment type="PTM">
    <text evidence="3">Proteolytically cleaved on its way through the secretory system, probably within the Golgi lumen. Proteolytic cleavage is not necessary for its chaperone activity. All non-secreted forms are not proteolytically cleaved. Chaperone activity of uncleaved forms is dependent on a non-reducing environment.</text>
</comment>
<comment type="PTM">
    <text evidence="3">Polyubiquitinated, leading to proteasomal degradation. Under cellular stress, the intracellular level of cleaved form is reduced due to proteasomal degradation.</text>
</comment>
<comment type="PTM">
    <text evidence="3">Heavily N-glycosylated. About 30% of the protein mass is comprised of complex N-linked carbohydrate. Endoplasmic reticulum (ER) stress induces changes in glycosylation status and increases level of hypoglycosylated forms. Core carbohydrates are essential for chaperone activity. Non-secreted forms are hypoglycosylated or unglycosylated.</text>
</comment>
<comment type="similarity">
    <text evidence="7">Belongs to the clusterin family.</text>
</comment>
<accession>Q9XSC5</accession>
<keyword id="KW-0143">Chaperone</keyword>
<keyword id="KW-0963">Cytoplasm</keyword>
<keyword id="KW-0968">Cytoplasmic vesicle</keyword>
<keyword id="KW-1015">Disulfide bond</keyword>
<keyword id="KW-0256">Endoplasmic reticulum</keyword>
<keyword id="KW-0325">Glycoprotein</keyword>
<keyword id="KW-0472">Membrane</keyword>
<keyword id="KW-0492">Microsome</keyword>
<keyword id="KW-0496">Mitochondrion</keyword>
<keyword id="KW-0539">Nucleus</keyword>
<keyword id="KW-0597">Phosphoprotein</keyword>
<keyword id="KW-1185">Reference proteome</keyword>
<keyword id="KW-0964">Secreted</keyword>
<keyword id="KW-0732">Signal</keyword>
<keyword id="KW-0832">Ubl conjugation</keyword>
<reference key="1">
    <citation type="journal article" date="2001" name="Circulation">
        <title>Apolipoprotein J/clusterin is induced in vascular smooth muscle cells after vascular injury.</title>
        <authorList>
            <person name="Miyata M."/>
            <person name="Biro S."/>
            <person name="Kaieda H."/>
            <person name="Eto H."/>
            <person name="Orihara K."/>
            <person name="Kihara T."/>
            <person name="Obata H."/>
            <person name="Matsushita N."/>
            <person name="Matsuyama T."/>
            <person name="Tei C."/>
        </authorList>
    </citation>
    <scope>NUCLEOTIDE SEQUENCE [MRNA]</scope>
    <source>
        <strain>Japanese white</strain>
    </source>
</reference>
<proteinExistence type="evidence at transcript level"/>
<feature type="signal peptide" evidence="1">
    <location>
        <begin position="1"/>
        <end position="22"/>
    </location>
</feature>
<feature type="chain" id="PRO_0000005541" description="Clusterin">
    <location>
        <begin position="23"/>
        <end position="447"/>
    </location>
</feature>
<feature type="chain" id="PRO_0000005542" description="Clusterin beta chain" evidence="1">
    <location>
        <begin position="23"/>
        <end position="225"/>
    </location>
</feature>
<feature type="chain" id="PRO_0000005543" description="Clusterin alpha chain" evidence="1">
    <location>
        <begin position="226"/>
        <end position="447"/>
    </location>
</feature>
<feature type="short sequence motif" description="Nuclear localization signal" evidence="4">
    <location>
        <begin position="77"/>
        <end position="80"/>
    </location>
</feature>
<feature type="short sequence motif" description="Nuclear localization signal" evidence="4">
    <location>
        <begin position="441"/>
        <end position="445"/>
    </location>
</feature>
<feature type="modified residue" description="Phosphoserine" evidence="3">
    <location>
        <position position="132"/>
    </location>
</feature>
<feature type="modified residue" description="Phosphoserine" evidence="3">
    <location>
        <position position="394"/>
    </location>
</feature>
<feature type="glycosylation site" description="N-linked (GlcNAc...) asparagine" evidence="5">
    <location>
        <position position="85"/>
    </location>
</feature>
<feature type="glycosylation site" description="N-linked (GlcNAc...) asparagine" evidence="5">
    <location>
        <position position="102"/>
    </location>
</feature>
<feature type="glycosylation site" description="N-linked (GlcNAc...) asparagine" evidence="5">
    <location>
        <position position="144"/>
    </location>
</feature>
<feature type="glycosylation site" description="N-linked (GlcNAc...) asparagine" evidence="5">
    <location>
        <position position="289"/>
    </location>
</feature>
<feature type="glycosylation site" description="N-linked (GlcNAc...) asparagine" evidence="5">
    <location>
        <position position="326"/>
    </location>
</feature>
<feature type="glycosylation site" description="N-linked (GlcNAc...) asparagine" evidence="5">
    <location>
        <position position="352"/>
    </location>
</feature>
<feature type="glycosylation site" description="N-linked (GlcNAc...) asparagine" evidence="5">
    <location>
        <position position="372"/>
    </location>
</feature>
<feature type="disulfide bond" description="Interchain (between beta and alpha chains)" evidence="1">
    <location>
        <begin position="101"/>
        <end position="311"/>
    </location>
</feature>
<feature type="disulfide bond" description="Interchain (between beta and alpha chains)" evidence="1">
    <location>
        <begin position="112"/>
        <end position="303"/>
    </location>
</feature>
<feature type="disulfide bond" description="Interchain (between beta and alpha chains)" evidence="1">
    <location>
        <begin position="115"/>
        <end position="300"/>
    </location>
</feature>
<feature type="disulfide bond" description="Interchain (between beta and alpha chains)" evidence="1">
    <location>
        <begin position="120"/>
        <end position="293"/>
    </location>
</feature>
<feature type="disulfide bond" description="Interchain (between beta and alpha chains)" evidence="1">
    <location>
        <begin position="128"/>
        <end position="283"/>
    </location>
</feature>
<sequence length="447" mass="51851">MKTLLLCVGLLLSWERGQVLGDQLVSDNELQEMSTQGSKYIDREIQNAVKGVQEIKTLIEKTNEERKTLLSVLEEAKKNKEDALNETRDSETKLKAFPEVCNETMMALWEECKPCLKQTCMKFYARVCRSGSGLVGRQLEEFLNQSSPFYFWINGDRIDSLLENDRQQSHVLDVMQDSFNRATGIMDELFQDRFFTHKPQDTFYHSPFSYFRRPPLHYAKSRLVRNIMPLSLYGPLNFQDMFQPFFEMIHQAQQAMDVHLHSPAYQTPNVEFITGGPDDRAVCKEIRHNSTGCLRMKDQCAKCQEILSVDCSANNPSQNQLRQELNDSLRLAEELTKRYNELLQSYQWKMLNTSSLLDQPNEQFNWVSQLANLTQGPDQYYLRVSTVTSHTSESEAPSRVTEVVVKLFDSDPITITIPEEVSRDNPKFMETVAEKALQEYRKKKRVE</sequence>
<evidence type="ECO:0000250" key="1"/>
<evidence type="ECO:0000250" key="2">
    <source>
        <dbReference type="UniProtKB" id="P05371"/>
    </source>
</evidence>
<evidence type="ECO:0000250" key="3">
    <source>
        <dbReference type="UniProtKB" id="P10909"/>
    </source>
</evidence>
<evidence type="ECO:0000250" key="4">
    <source>
        <dbReference type="UniProtKB" id="Q06890"/>
    </source>
</evidence>
<evidence type="ECO:0000255" key="5"/>
<evidence type="ECO:0000303" key="6">
    <source>
    </source>
</evidence>
<evidence type="ECO:0000305" key="7"/>
<dbReference type="EMBL" id="AF118852">
    <property type="protein sequence ID" value="AAD24461.1"/>
    <property type="molecule type" value="mRNA"/>
</dbReference>
<dbReference type="RefSeq" id="NP_001075518.1">
    <property type="nucleotide sequence ID" value="NM_001082049.2"/>
</dbReference>
<dbReference type="SMR" id="Q9XSC5"/>
<dbReference type="FunCoup" id="Q9XSC5">
    <property type="interactions" value="162"/>
</dbReference>
<dbReference type="STRING" id="9986.ENSOCUP00000005178"/>
<dbReference type="GlyCosmos" id="Q9XSC5">
    <property type="glycosylation" value="7 sites, No reported glycans"/>
</dbReference>
<dbReference type="PaxDb" id="9986-ENSOCUP00000005178"/>
<dbReference type="GeneID" id="100008713"/>
<dbReference type="KEGG" id="ocu:100008713"/>
<dbReference type="CTD" id="1191"/>
<dbReference type="eggNOG" id="ENOG502RBQP">
    <property type="taxonomic scope" value="Eukaryota"/>
</dbReference>
<dbReference type="InParanoid" id="Q9XSC5"/>
<dbReference type="OrthoDB" id="9018825at2759"/>
<dbReference type="Proteomes" id="UP000001811">
    <property type="component" value="Unplaced"/>
</dbReference>
<dbReference type="GO" id="GO:0042583">
    <property type="term" value="C:chromaffin granule"/>
    <property type="evidence" value="ECO:0007669"/>
    <property type="project" value="UniProtKB-SubCell"/>
</dbReference>
<dbReference type="GO" id="GO:0005737">
    <property type="term" value="C:cytoplasm"/>
    <property type="evidence" value="ECO:0000250"/>
    <property type="project" value="UniProtKB"/>
</dbReference>
<dbReference type="GO" id="GO:0005829">
    <property type="term" value="C:cytosol"/>
    <property type="evidence" value="ECO:0000250"/>
    <property type="project" value="UniProtKB"/>
</dbReference>
<dbReference type="GO" id="GO:0005615">
    <property type="term" value="C:extracellular space"/>
    <property type="evidence" value="ECO:0000250"/>
    <property type="project" value="UniProtKB"/>
</dbReference>
<dbReference type="GO" id="GO:0043231">
    <property type="term" value="C:intracellular membrane-bounded organelle"/>
    <property type="evidence" value="ECO:0000250"/>
    <property type="project" value="UniProtKB"/>
</dbReference>
<dbReference type="GO" id="GO:0005743">
    <property type="term" value="C:mitochondrial inner membrane"/>
    <property type="evidence" value="ECO:0000250"/>
    <property type="project" value="UniProtKB"/>
</dbReference>
<dbReference type="GO" id="GO:0005739">
    <property type="term" value="C:mitochondrion"/>
    <property type="evidence" value="ECO:0000250"/>
    <property type="project" value="UniProtKB"/>
</dbReference>
<dbReference type="GO" id="GO:0005634">
    <property type="term" value="C:nucleus"/>
    <property type="evidence" value="ECO:0000250"/>
    <property type="project" value="UniProtKB"/>
</dbReference>
<dbReference type="GO" id="GO:0099020">
    <property type="term" value="C:perinuclear endoplasmic reticulum lumen"/>
    <property type="evidence" value="ECO:0000250"/>
    <property type="project" value="UniProtKB"/>
</dbReference>
<dbReference type="GO" id="GO:0048471">
    <property type="term" value="C:perinuclear region of cytoplasm"/>
    <property type="evidence" value="ECO:0000250"/>
    <property type="project" value="UniProtKB"/>
</dbReference>
<dbReference type="GO" id="GO:0034366">
    <property type="term" value="C:spherical high-density lipoprotein particle"/>
    <property type="evidence" value="ECO:0000250"/>
    <property type="project" value="UniProtKB"/>
</dbReference>
<dbReference type="GO" id="GO:0051787">
    <property type="term" value="F:misfolded protein binding"/>
    <property type="evidence" value="ECO:0000250"/>
    <property type="project" value="UniProtKB"/>
</dbReference>
<dbReference type="GO" id="GO:0031625">
    <property type="term" value="F:ubiquitin protein ligase binding"/>
    <property type="evidence" value="ECO:0000250"/>
    <property type="project" value="UniProtKB"/>
</dbReference>
<dbReference type="GO" id="GO:0051082">
    <property type="term" value="F:unfolded protein binding"/>
    <property type="evidence" value="ECO:0000250"/>
    <property type="project" value="UniProtKB"/>
</dbReference>
<dbReference type="GO" id="GO:0061077">
    <property type="term" value="P:chaperone-mediated protein folding"/>
    <property type="evidence" value="ECO:0000250"/>
    <property type="project" value="UniProtKB"/>
</dbReference>
<dbReference type="GO" id="GO:0002434">
    <property type="term" value="P:immune complex clearance"/>
    <property type="evidence" value="ECO:0000250"/>
    <property type="project" value="UniProtKB"/>
</dbReference>
<dbReference type="GO" id="GO:0097193">
    <property type="term" value="P:intrinsic apoptotic signaling pathway"/>
    <property type="evidence" value="ECO:0000250"/>
    <property type="project" value="UniProtKB"/>
</dbReference>
<dbReference type="GO" id="GO:1905907">
    <property type="term" value="P:negative regulation of amyloid fibril formation"/>
    <property type="evidence" value="ECO:0000250"/>
    <property type="project" value="UniProtKB"/>
</dbReference>
<dbReference type="GO" id="GO:1902230">
    <property type="term" value="P:negative regulation of intrinsic apoptotic signaling pathway in response to DNA damage"/>
    <property type="evidence" value="ECO:0000250"/>
    <property type="project" value="UniProtKB"/>
</dbReference>
<dbReference type="GO" id="GO:0031333">
    <property type="term" value="P:negative regulation of protein-containing complex assembly"/>
    <property type="evidence" value="ECO:0000250"/>
    <property type="project" value="UniProtKB"/>
</dbReference>
<dbReference type="GO" id="GO:0043065">
    <property type="term" value="P:positive regulation of apoptotic process"/>
    <property type="evidence" value="ECO:0000250"/>
    <property type="project" value="UniProtKB"/>
</dbReference>
<dbReference type="GO" id="GO:2001244">
    <property type="term" value="P:positive regulation of intrinsic apoptotic signaling pathway"/>
    <property type="evidence" value="ECO:0000250"/>
    <property type="project" value="UniProtKB"/>
</dbReference>
<dbReference type="GO" id="GO:0051092">
    <property type="term" value="P:positive regulation of NF-kappaB transcription factor activity"/>
    <property type="evidence" value="ECO:0000250"/>
    <property type="project" value="UniProtKB"/>
</dbReference>
<dbReference type="GO" id="GO:0032436">
    <property type="term" value="P:positive regulation of proteasomal ubiquitin-dependent protein catabolic process"/>
    <property type="evidence" value="ECO:0000250"/>
    <property type="project" value="UniProtKB"/>
</dbReference>
<dbReference type="GO" id="GO:0048260">
    <property type="term" value="P:positive regulation of receptor-mediated endocytosis"/>
    <property type="evidence" value="ECO:0000250"/>
    <property type="project" value="UniProtKB"/>
</dbReference>
<dbReference type="GO" id="GO:2000060">
    <property type="term" value="P:positive regulation of ubiquitin-dependent protein catabolic process"/>
    <property type="evidence" value="ECO:0000250"/>
    <property type="project" value="UniProtKB"/>
</dbReference>
<dbReference type="GO" id="GO:0050821">
    <property type="term" value="P:protein stabilization"/>
    <property type="evidence" value="ECO:0000250"/>
    <property type="project" value="UniProtKB"/>
</dbReference>
<dbReference type="GO" id="GO:0042127">
    <property type="term" value="P:regulation of cell population proliferation"/>
    <property type="evidence" value="ECO:0000250"/>
    <property type="project" value="UniProtKB"/>
</dbReference>
<dbReference type="GO" id="GO:0051788">
    <property type="term" value="P:response to misfolded protein"/>
    <property type="evidence" value="ECO:0000250"/>
    <property type="project" value="UniProtKB"/>
</dbReference>
<dbReference type="InterPro" id="IPR016016">
    <property type="entry name" value="Clusterin"/>
</dbReference>
<dbReference type="InterPro" id="IPR000753">
    <property type="entry name" value="Clusterin-like"/>
</dbReference>
<dbReference type="InterPro" id="IPR016015">
    <property type="entry name" value="Clusterin_C"/>
</dbReference>
<dbReference type="InterPro" id="IPR033986">
    <property type="entry name" value="Clusterin_CS"/>
</dbReference>
<dbReference type="InterPro" id="IPR016014">
    <property type="entry name" value="Clusterin_N"/>
</dbReference>
<dbReference type="PANTHER" id="PTHR10970">
    <property type="entry name" value="CLUSTERIN"/>
    <property type="match status" value="1"/>
</dbReference>
<dbReference type="PANTHER" id="PTHR10970:SF1">
    <property type="entry name" value="CLUSTERIN"/>
    <property type="match status" value="1"/>
</dbReference>
<dbReference type="Pfam" id="PF01093">
    <property type="entry name" value="Clusterin"/>
    <property type="match status" value="1"/>
</dbReference>
<dbReference type="PIRSF" id="PIRSF002368">
    <property type="entry name" value="Clusterin"/>
    <property type="match status" value="1"/>
</dbReference>
<dbReference type="SMART" id="SM00035">
    <property type="entry name" value="CLa"/>
    <property type="match status" value="1"/>
</dbReference>
<dbReference type="SMART" id="SM00030">
    <property type="entry name" value="CLb"/>
    <property type="match status" value="1"/>
</dbReference>
<dbReference type="PROSITE" id="PS00492">
    <property type="entry name" value="CLUSTERIN_1"/>
    <property type="match status" value="1"/>
</dbReference>
<gene>
    <name type="primary">CLU</name>
    <name evidence="6" type="synonym">ApoJ</name>
</gene>
<protein>
    <recommendedName>
        <fullName evidence="6">Clusterin</fullName>
    </recommendedName>
    <alternativeName>
        <fullName evidence="6">Apolipoprotein J</fullName>
        <shortName>Apo-J</shortName>
    </alternativeName>
    <component>
        <recommendedName>
            <fullName>Clusterin beta chain</fullName>
        </recommendedName>
    </component>
    <component>
        <recommendedName>
            <fullName>Clusterin alpha chain</fullName>
        </recommendedName>
    </component>
</protein>
<name>CLUS_RABIT</name>
<organism>
    <name type="scientific">Oryctolagus cuniculus</name>
    <name type="common">Rabbit</name>
    <dbReference type="NCBI Taxonomy" id="9986"/>
    <lineage>
        <taxon>Eukaryota</taxon>
        <taxon>Metazoa</taxon>
        <taxon>Chordata</taxon>
        <taxon>Craniata</taxon>
        <taxon>Vertebrata</taxon>
        <taxon>Euteleostomi</taxon>
        <taxon>Mammalia</taxon>
        <taxon>Eutheria</taxon>
        <taxon>Euarchontoglires</taxon>
        <taxon>Glires</taxon>
        <taxon>Lagomorpha</taxon>
        <taxon>Leporidae</taxon>
        <taxon>Oryctolagus</taxon>
    </lineage>
</organism>